<protein>
    <recommendedName>
        <fullName evidence="1">Chaperonin GroEL</fullName>
        <ecNumber evidence="1">5.6.1.7</ecNumber>
    </recommendedName>
    <alternativeName>
        <fullName evidence="1">60 kDa chaperonin</fullName>
    </alternativeName>
    <alternativeName>
        <fullName evidence="1">Chaperonin-60</fullName>
        <shortName evidence="1">Cpn60</shortName>
    </alternativeName>
</protein>
<accession>A1UTX7</accession>
<proteinExistence type="inferred from homology"/>
<comment type="function">
    <text evidence="1">Together with its co-chaperonin GroES, plays an essential role in assisting protein folding. The GroEL-GroES system forms a nano-cage that allows encapsulation of the non-native substrate proteins and provides a physical environment optimized to promote and accelerate protein folding.</text>
</comment>
<comment type="catalytic activity">
    <reaction evidence="1">
        <text>ATP + H2O + a folded polypeptide = ADP + phosphate + an unfolded polypeptide.</text>
        <dbReference type="EC" id="5.6.1.7"/>
    </reaction>
</comment>
<comment type="subunit">
    <text evidence="1">Forms a cylinder of 14 subunits composed of two heptameric rings stacked back-to-back. Interacts with the co-chaperonin GroES.</text>
</comment>
<comment type="subcellular location">
    <subcellularLocation>
        <location evidence="1">Cytoplasm</location>
    </subcellularLocation>
</comment>
<comment type="similarity">
    <text evidence="1">Belongs to the chaperonin (HSP60) family.</text>
</comment>
<name>CH60_BARBK</name>
<reference key="1">
    <citation type="submission" date="2006-12" db="EMBL/GenBank/DDBJ databases">
        <authorList>
            <person name="Hendrix L."/>
            <person name="Mohamoud Y."/>
            <person name="Radune D."/>
            <person name="Shvartsbeyn A."/>
            <person name="Daugherty S."/>
            <person name="Dodson R."/>
            <person name="Durkin A.S."/>
            <person name="Harkins D."/>
            <person name="Huot H."/>
            <person name="Kothari S.P."/>
            <person name="Madupu R."/>
            <person name="Li J."/>
            <person name="Nelson W.C."/>
            <person name="Shrivastava S."/>
            <person name="Giglio M.G."/>
            <person name="Haft D."/>
            <person name="Selengut J."/>
            <person name="Fraser-Ligget C."/>
            <person name="Seshadri R."/>
        </authorList>
    </citation>
    <scope>NUCLEOTIDE SEQUENCE [LARGE SCALE GENOMIC DNA]</scope>
    <source>
        <strain>ATCC 35685 / KC583 / Herrer 020/F12,63</strain>
    </source>
</reference>
<organism>
    <name type="scientific">Bartonella bacilliformis (strain ATCC 35685 / KC583 / Herrer 020/F12,63)</name>
    <dbReference type="NCBI Taxonomy" id="360095"/>
    <lineage>
        <taxon>Bacteria</taxon>
        <taxon>Pseudomonadati</taxon>
        <taxon>Pseudomonadota</taxon>
        <taxon>Alphaproteobacteria</taxon>
        <taxon>Hyphomicrobiales</taxon>
        <taxon>Bartonellaceae</taxon>
        <taxon>Bartonella</taxon>
    </lineage>
</organism>
<sequence length="544" mass="57520">MAAKEVKFGRDARERLLRGVDILADAVKVTLGPKGRNVVIDKSFGAPRITKDGVSVAKEIELENKFENMGAQMLREVASKTNDIAGDGTTTATVLGQAIVQEGVKAVAASMNPMDLKRGIDAAVEAVVADLFKKAKKIQTSEEIAQVATISANGAEDIGKMIADAMEKVGNEGVITVEEAKTAETELEVVEGMQFDRGYLSPYFVTNSEKMMVDLDDPYILIHEKKLSNLQSLLPVLEAVVQSGKPLLIIAEDVEGEALATLVVNKLRGGLKIAAVKAPGFGDRRKAMLEDIAVLTSGQVISEDVGIKLENVTLEMLGRAKKVHVSKETTTIVDGAGQKSEINARVSQIKAQIEETTSDYDREKLQERLAKLAGGVAVIRVGGSTEVEVKEKKDRVDDALNATRAAVEEGIVPGGGTALLRAAKALSIKGKNPDQEAGIGIIRRALQAPARQIAHNAGEEAAVIVGKVLENCSDTFGYNTATAQFGDLISFGIVDPVKVVRSALQNAASIASLLITTEAMVAEVPKKEAAAPAMPGGGMGGMDF</sequence>
<feature type="chain" id="PRO_1000025754" description="Chaperonin GroEL">
    <location>
        <begin position="1"/>
        <end position="544"/>
    </location>
</feature>
<feature type="binding site" evidence="1">
    <location>
        <begin position="30"/>
        <end position="33"/>
    </location>
    <ligand>
        <name>ATP</name>
        <dbReference type="ChEBI" id="CHEBI:30616"/>
    </ligand>
</feature>
<feature type="binding site" evidence="1">
    <location>
        <position position="51"/>
    </location>
    <ligand>
        <name>ATP</name>
        <dbReference type="ChEBI" id="CHEBI:30616"/>
    </ligand>
</feature>
<feature type="binding site" evidence="1">
    <location>
        <begin position="87"/>
        <end position="91"/>
    </location>
    <ligand>
        <name>ATP</name>
        <dbReference type="ChEBI" id="CHEBI:30616"/>
    </ligand>
</feature>
<feature type="binding site" evidence="1">
    <location>
        <position position="415"/>
    </location>
    <ligand>
        <name>ATP</name>
        <dbReference type="ChEBI" id="CHEBI:30616"/>
    </ligand>
</feature>
<feature type="binding site" evidence="1">
    <location>
        <position position="495"/>
    </location>
    <ligand>
        <name>ATP</name>
        <dbReference type="ChEBI" id="CHEBI:30616"/>
    </ligand>
</feature>
<keyword id="KW-0067">ATP-binding</keyword>
<keyword id="KW-0143">Chaperone</keyword>
<keyword id="KW-0963">Cytoplasm</keyword>
<keyword id="KW-0413">Isomerase</keyword>
<keyword id="KW-0547">Nucleotide-binding</keyword>
<evidence type="ECO:0000255" key="1">
    <source>
        <dbReference type="HAMAP-Rule" id="MF_00600"/>
    </source>
</evidence>
<gene>
    <name evidence="1" type="primary">groEL</name>
    <name evidence="1" type="synonym">groL</name>
    <name type="ordered locus">BARBAKC583_1172</name>
</gene>
<dbReference type="EC" id="5.6.1.7" evidence="1"/>
<dbReference type="EMBL" id="CP000524">
    <property type="protein sequence ID" value="ABM45653.1"/>
    <property type="molecule type" value="Genomic_DNA"/>
</dbReference>
<dbReference type="RefSeq" id="WP_005767840.1">
    <property type="nucleotide sequence ID" value="NC_008783.1"/>
</dbReference>
<dbReference type="SMR" id="A1UTX7"/>
<dbReference type="STRING" id="360095.BARBAKC583_1172"/>
<dbReference type="GeneID" id="4683978"/>
<dbReference type="KEGG" id="bbk:BARBAKC583_1172"/>
<dbReference type="eggNOG" id="COG0459">
    <property type="taxonomic scope" value="Bacteria"/>
</dbReference>
<dbReference type="HOGENOM" id="CLU_016503_3_0_5"/>
<dbReference type="OrthoDB" id="9766614at2"/>
<dbReference type="Proteomes" id="UP000000643">
    <property type="component" value="Chromosome"/>
</dbReference>
<dbReference type="GO" id="GO:0005737">
    <property type="term" value="C:cytoplasm"/>
    <property type="evidence" value="ECO:0007669"/>
    <property type="project" value="UniProtKB-SubCell"/>
</dbReference>
<dbReference type="GO" id="GO:0005524">
    <property type="term" value="F:ATP binding"/>
    <property type="evidence" value="ECO:0007669"/>
    <property type="project" value="UniProtKB-UniRule"/>
</dbReference>
<dbReference type="GO" id="GO:0140662">
    <property type="term" value="F:ATP-dependent protein folding chaperone"/>
    <property type="evidence" value="ECO:0007669"/>
    <property type="project" value="InterPro"/>
</dbReference>
<dbReference type="GO" id="GO:0016853">
    <property type="term" value="F:isomerase activity"/>
    <property type="evidence" value="ECO:0007669"/>
    <property type="project" value="UniProtKB-KW"/>
</dbReference>
<dbReference type="GO" id="GO:0051082">
    <property type="term" value="F:unfolded protein binding"/>
    <property type="evidence" value="ECO:0007669"/>
    <property type="project" value="UniProtKB-UniRule"/>
</dbReference>
<dbReference type="GO" id="GO:0042026">
    <property type="term" value="P:protein refolding"/>
    <property type="evidence" value="ECO:0007669"/>
    <property type="project" value="UniProtKB-UniRule"/>
</dbReference>
<dbReference type="CDD" id="cd03344">
    <property type="entry name" value="GroEL"/>
    <property type="match status" value="1"/>
</dbReference>
<dbReference type="FunFam" id="1.10.560.10:FF:000001">
    <property type="entry name" value="60 kDa chaperonin"/>
    <property type="match status" value="1"/>
</dbReference>
<dbReference type="FunFam" id="3.50.7.10:FF:000001">
    <property type="entry name" value="60 kDa chaperonin"/>
    <property type="match status" value="1"/>
</dbReference>
<dbReference type="Gene3D" id="3.50.7.10">
    <property type="entry name" value="GroEL"/>
    <property type="match status" value="1"/>
</dbReference>
<dbReference type="Gene3D" id="1.10.560.10">
    <property type="entry name" value="GroEL-like equatorial domain"/>
    <property type="match status" value="1"/>
</dbReference>
<dbReference type="Gene3D" id="3.30.260.10">
    <property type="entry name" value="TCP-1-like chaperonin intermediate domain"/>
    <property type="match status" value="1"/>
</dbReference>
<dbReference type="HAMAP" id="MF_00600">
    <property type="entry name" value="CH60"/>
    <property type="match status" value="1"/>
</dbReference>
<dbReference type="InterPro" id="IPR018370">
    <property type="entry name" value="Chaperonin_Cpn60_CS"/>
</dbReference>
<dbReference type="InterPro" id="IPR001844">
    <property type="entry name" value="Cpn60/GroEL"/>
</dbReference>
<dbReference type="InterPro" id="IPR002423">
    <property type="entry name" value="Cpn60/GroEL/TCP-1"/>
</dbReference>
<dbReference type="InterPro" id="IPR027409">
    <property type="entry name" value="GroEL-like_apical_dom_sf"/>
</dbReference>
<dbReference type="InterPro" id="IPR027413">
    <property type="entry name" value="GROEL-like_equatorial_sf"/>
</dbReference>
<dbReference type="InterPro" id="IPR027410">
    <property type="entry name" value="TCP-1-like_intermed_sf"/>
</dbReference>
<dbReference type="NCBIfam" id="TIGR02348">
    <property type="entry name" value="GroEL"/>
    <property type="match status" value="1"/>
</dbReference>
<dbReference type="NCBIfam" id="NF000592">
    <property type="entry name" value="PRK00013.1"/>
    <property type="match status" value="1"/>
</dbReference>
<dbReference type="NCBIfam" id="NF009487">
    <property type="entry name" value="PRK12849.1"/>
    <property type="match status" value="1"/>
</dbReference>
<dbReference type="NCBIfam" id="NF009488">
    <property type="entry name" value="PRK12850.1"/>
    <property type="match status" value="1"/>
</dbReference>
<dbReference type="NCBIfam" id="NF009489">
    <property type="entry name" value="PRK12851.1"/>
    <property type="match status" value="1"/>
</dbReference>
<dbReference type="PANTHER" id="PTHR45633">
    <property type="entry name" value="60 KDA HEAT SHOCK PROTEIN, MITOCHONDRIAL"/>
    <property type="match status" value="1"/>
</dbReference>
<dbReference type="Pfam" id="PF00118">
    <property type="entry name" value="Cpn60_TCP1"/>
    <property type="match status" value="1"/>
</dbReference>
<dbReference type="PRINTS" id="PR00298">
    <property type="entry name" value="CHAPERONIN60"/>
</dbReference>
<dbReference type="SUPFAM" id="SSF52029">
    <property type="entry name" value="GroEL apical domain-like"/>
    <property type="match status" value="1"/>
</dbReference>
<dbReference type="SUPFAM" id="SSF48592">
    <property type="entry name" value="GroEL equatorial domain-like"/>
    <property type="match status" value="1"/>
</dbReference>
<dbReference type="SUPFAM" id="SSF54849">
    <property type="entry name" value="GroEL-intermediate domain like"/>
    <property type="match status" value="1"/>
</dbReference>
<dbReference type="PROSITE" id="PS00296">
    <property type="entry name" value="CHAPERONINS_CPN60"/>
    <property type="match status" value="1"/>
</dbReference>